<gene>
    <name evidence="1" type="primary">bchN</name>
    <name type="ordered locus">BRADO1639</name>
</gene>
<comment type="function">
    <text evidence="1">Component of the dark-operative protochlorophyllide reductase (DPOR) that uses Mg-ATP and reduced ferredoxin to reduce ring D of protochlorophyllide (Pchlide) to form chlorophyllide a (Chlide). This reaction is light-independent. The NB-protein (BchN-BchB) is the catalytic component of the complex.</text>
</comment>
<comment type="catalytic activity">
    <reaction evidence="1">
        <text>chlorophyllide a + oxidized 2[4Fe-4S]-[ferredoxin] + 2 ADP + 2 phosphate = protochlorophyllide a + reduced 2[4Fe-4S]-[ferredoxin] + 2 ATP + 2 H2O</text>
        <dbReference type="Rhea" id="RHEA:28202"/>
        <dbReference type="Rhea" id="RHEA-COMP:10002"/>
        <dbReference type="Rhea" id="RHEA-COMP:10004"/>
        <dbReference type="ChEBI" id="CHEBI:15377"/>
        <dbReference type="ChEBI" id="CHEBI:30616"/>
        <dbReference type="ChEBI" id="CHEBI:33722"/>
        <dbReference type="ChEBI" id="CHEBI:33723"/>
        <dbReference type="ChEBI" id="CHEBI:43474"/>
        <dbReference type="ChEBI" id="CHEBI:83348"/>
        <dbReference type="ChEBI" id="CHEBI:83350"/>
        <dbReference type="ChEBI" id="CHEBI:456216"/>
        <dbReference type="EC" id="1.3.7.7"/>
    </reaction>
</comment>
<comment type="cofactor">
    <cofactor evidence="1">
        <name>[4Fe-4S] cluster</name>
        <dbReference type="ChEBI" id="CHEBI:49883"/>
    </cofactor>
    <text evidence="1">Binds 1 [4Fe-4S] cluster per heterodimer. The cluster is bound at the heterodimer interface by residues from both subunits.</text>
</comment>
<comment type="pathway">
    <text evidence="1">Porphyrin-containing compound metabolism; bacteriochlorophyll biosynthesis (light-independent).</text>
</comment>
<comment type="subunit">
    <text evidence="1">Protochlorophyllide reductase is composed of three subunits; BchL, BchN and BchB. Forms a heterotetramer of two BchB and two BchN subunits.</text>
</comment>
<comment type="similarity">
    <text evidence="1">Belongs to the BchN/ChlN family.</text>
</comment>
<reference key="1">
    <citation type="journal article" date="2007" name="Science">
        <title>Legumes symbioses: absence of nod genes in photosynthetic bradyrhizobia.</title>
        <authorList>
            <person name="Giraud E."/>
            <person name="Moulin L."/>
            <person name="Vallenet D."/>
            <person name="Barbe V."/>
            <person name="Cytryn E."/>
            <person name="Avarre J.-C."/>
            <person name="Jaubert M."/>
            <person name="Simon D."/>
            <person name="Cartieaux F."/>
            <person name="Prin Y."/>
            <person name="Bena G."/>
            <person name="Hannibal L."/>
            <person name="Fardoux J."/>
            <person name="Kojadinovic M."/>
            <person name="Vuillet L."/>
            <person name="Lajus A."/>
            <person name="Cruveiller S."/>
            <person name="Rouy Z."/>
            <person name="Mangenot S."/>
            <person name="Segurens B."/>
            <person name="Dossat C."/>
            <person name="Franck W.L."/>
            <person name="Chang W.-S."/>
            <person name="Saunders E."/>
            <person name="Bruce D."/>
            <person name="Richardson P."/>
            <person name="Normand P."/>
            <person name="Dreyfus B."/>
            <person name="Pignol D."/>
            <person name="Stacey G."/>
            <person name="Emerich D."/>
            <person name="Vermeglio A."/>
            <person name="Medigue C."/>
            <person name="Sadowsky M."/>
        </authorList>
    </citation>
    <scope>NUCLEOTIDE SEQUENCE [LARGE SCALE GENOMIC DNA]</scope>
    <source>
        <strain>ORS 278</strain>
    </source>
</reference>
<evidence type="ECO:0000255" key="1">
    <source>
        <dbReference type="HAMAP-Rule" id="MF_00352"/>
    </source>
</evidence>
<accession>A4YNP1</accession>
<feature type="chain" id="PRO_0000324001" description="Light-independent protochlorophyllide reductase subunit N">
    <location>
        <begin position="1"/>
        <end position="427"/>
    </location>
</feature>
<feature type="binding site" evidence="1">
    <location>
        <position position="29"/>
    </location>
    <ligand>
        <name>[4Fe-4S] cluster</name>
        <dbReference type="ChEBI" id="CHEBI:49883"/>
        <note>ligand shared with heterodimeric partner</note>
    </ligand>
</feature>
<feature type="binding site" evidence="1">
    <location>
        <position position="54"/>
    </location>
    <ligand>
        <name>[4Fe-4S] cluster</name>
        <dbReference type="ChEBI" id="CHEBI:49883"/>
        <note>ligand shared with heterodimeric partner</note>
    </ligand>
</feature>
<feature type="binding site" evidence="1">
    <location>
        <position position="115"/>
    </location>
    <ligand>
        <name>[4Fe-4S] cluster</name>
        <dbReference type="ChEBI" id="CHEBI:49883"/>
        <note>ligand shared with heterodimeric partner</note>
    </ligand>
</feature>
<name>BCHN_BRASO</name>
<organism>
    <name type="scientific">Bradyrhizobium sp. (strain ORS 278)</name>
    <dbReference type="NCBI Taxonomy" id="114615"/>
    <lineage>
        <taxon>Bacteria</taxon>
        <taxon>Pseudomonadati</taxon>
        <taxon>Pseudomonadota</taxon>
        <taxon>Alphaproteobacteria</taxon>
        <taxon>Hyphomicrobiales</taxon>
        <taxon>Nitrobacteraceae</taxon>
        <taxon>Bradyrhizobium</taxon>
    </lineage>
</organism>
<proteinExistence type="inferred from homology"/>
<keyword id="KW-0004">4Fe-4S</keyword>
<keyword id="KW-0067">ATP-binding</keyword>
<keyword id="KW-0077">Bacteriochlorophyll biosynthesis</keyword>
<keyword id="KW-0149">Chlorophyll biosynthesis</keyword>
<keyword id="KW-0408">Iron</keyword>
<keyword id="KW-0411">Iron-sulfur</keyword>
<keyword id="KW-0479">Metal-binding</keyword>
<keyword id="KW-0547">Nucleotide-binding</keyword>
<keyword id="KW-0560">Oxidoreductase</keyword>
<keyword id="KW-0602">Photosynthesis</keyword>
<keyword id="KW-1185">Reference proteome</keyword>
<protein>
    <recommendedName>
        <fullName evidence="1">Light-independent protochlorophyllide reductase subunit N</fullName>
        <shortName evidence="1">DPOR subunit N</shortName>
        <shortName evidence="1">LI-POR subunit N</shortName>
        <ecNumber evidence="1">1.3.7.7</ecNumber>
    </recommendedName>
</protein>
<dbReference type="EC" id="1.3.7.7" evidence="1"/>
<dbReference type="EMBL" id="CU234118">
    <property type="protein sequence ID" value="CAL75517.1"/>
    <property type="molecule type" value="Genomic_DNA"/>
</dbReference>
<dbReference type="RefSeq" id="WP_011924746.1">
    <property type="nucleotide sequence ID" value="NC_009445.1"/>
</dbReference>
<dbReference type="SMR" id="A4YNP1"/>
<dbReference type="STRING" id="114615.BRADO1639"/>
<dbReference type="KEGG" id="bra:BRADO1639"/>
<dbReference type="eggNOG" id="COG2710">
    <property type="taxonomic scope" value="Bacteria"/>
</dbReference>
<dbReference type="HOGENOM" id="CLU_037170_0_0_5"/>
<dbReference type="OrthoDB" id="5714774at2"/>
<dbReference type="UniPathway" id="UPA00671"/>
<dbReference type="Proteomes" id="UP000001994">
    <property type="component" value="Chromosome"/>
</dbReference>
<dbReference type="GO" id="GO:0051539">
    <property type="term" value="F:4 iron, 4 sulfur cluster binding"/>
    <property type="evidence" value="ECO:0007669"/>
    <property type="project" value="UniProtKB-UniRule"/>
</dbReference>
<dbReference type="GO" id="GO:0005524">
    <property type="term" value="F:ATP binding"/>
    <property type="evidence" value="ECO:0007669"/>
    <property type="project" value="UniProtKB-UniRule"/>
</dbReference>
<dbReference type="GO" id="GO:0046872">
    <property type="term" value="F:metal ion binding"/>
    <property type="evidence" value="ECO:0007669"/>
    <property type="project" value="UniProtKB-KW"/>
</dbReference>
<dbReference type="GO" id="GO:0016730">
    <property type="term" value="F:oxidoreductase activity, acting on iron-sulfur proteins as donors"/>
    <property type="evidence" value="ECO:0007669"/>
    <property type="project" value="InterPro"/>
</dbReference>
<dbReference type="GO" id="GO:0016636">
    <property type="term" value="F:oxidoreductase activity, acting on the CH-CH group of donors, iron-sulfur protein as acceptor"/>
    <property type="evidence" value="ECO:0007669"/>
    <property type="project" value="UniProtKB-UniRule"/>
</dbReference>
<dbReference type="GO" id="GO:0036070">
    <property type="term" value="P:light-independent bacteriochlorophyll biosynthetic process"/>
    <property type="evidence" value="ECO:0007669"/>
    <property type="project" value="UniProtKB-UniRule"/>
</dbReference>
<dbReference type="GO" id="GO:0019685">
    <property type="term" value="P:photosynthesis, dark reaction"/>
    <property type="evidence" value="ECO:0007669"/>
    <property type="project" value="InterPro"/>
</dbReference>
<dbReference type="Gene3D" id="3.40.50.1980">
    <property type="entry name" value="Nitrogenase molybdenum iron protein domain"/>
    <property type="match status" value="3"/>
</dbReference>
<dbReference type="HAMAP" id="MF_00352">
    <property type="entry name" value="ChlN_BchN"/>
    <property type="match status" value="1"/>
</dbReference>
<dbReference type="InterPro" id="IPR050293">
    <property type="entry name" value="LIPOR_BchN/ChlN"/>
</dbReference>
<dbReference type="InterPro" id="IPR000510">
    <property type="entry name" value="Nase/OxRdtase_comp1"/>
</dbReference>
<dbReference type="InterPro" id="IPR005970">
    <property type="entry name" value="Protochl_reductN"/>
</dbReference>
<dbReference type="NCBIfam" id="TIGR01279">
    <property type="entry name" value="DPOR_bchN"/>
    <property type="match status" value="1"/>
</dbReference>
<dbReference type="NCBIfam" id="NF002768">
    <property type="entry name" value="PRK02842.1"/>
    <property type="match status" value="1"/>
</dbReference>
<dbReference type="PANTHER" id="PTHR39429">
    <property type="entry name" value="LIGHT-INDEPENDENT PROTOCHLOROPHYLLIDE REDUCTASE SUBUNIT N"/>
    <property type="match status" value="1"/>
</dbReference>
<dbReference type="PANTHER" id="PTHR39429:SF3">
    <property type="entry name" value="LIGHT-INDEPENDENT PROTOCHLOROPHYLLIDE REDUCTASE SUBUNIT N"/>
    <property type="match status" value="1"/>
</dbReference>
<dbReference type="Pfam" id="PF00148">
    <property type="entry name" value="Oxidored_nitro"/>
    <property type="match status" value="1"/>
</dbReference>
<dbReference type="PIRSF" id="PIRSF000162">
    <property type="entry name" value="P_chlorophyll_rd"/>
    <property type="match status" value="1"/>
</dbReference>
<dbReference type="SUPFAM" id="SSF53807">
    <property type="entry name" value="Helical backbone' metal receptor"/>
    <property type="match status" value="1"/>
</dbReference>
<sequence length="427" mass="46380">MNAHAQACAVTSSSPDGVLRERGQREVFCGLTGIVWLHRKIQDAFFLVVGSRTCAHLIQSAAGVMIFAEPRFATAIMEERDLAGLVDANDELDRIVAQLLARRPDIKLLFLVGSCPSEVIKLDLSRAALRLSQRFSPGVRVLNYSGSGIETTFTQGEDACLAALVPVLPSADRNARPSLLVVGALADVVEDQFKRTFAALGIDNVAFLPPRRSSELPAIGPETRVLLAQPFLGDTARALEERGCRRISAPFPLGGEGTALWLAAAADAFGVSRAHVERTLAPLKARAEKALARYRAQLAGKRVFLFPDSQIEIPLARFLAREIGMELVEVGTPYLHRDHLAAELPMLPAGTLLSEGQDVERQLDRCREARPDLVVCGLGLANPLEAEGLTTKWSIELIFTPIQGFEQAGDLAELFARPLLRQTRLAV</sequence>